<keyword id="KW-1003">Cell membrane</keyword>
<keyword id="KW-0210">Decarboxylase</keyword>
<keyword id="KW-0285">Flavoprotein</keyword>
<keyword id="KW-0288">FMN</keyword>
<keyword id="KW-0456">Lyase</keyword>
<keyword id="KW-0464">Manganese</keyword>
<keyword id="KW-0472">Membrane</keyword>
<keyword id="KW-0479">Metal-binding</keyword>
<keyword id="KW-0831">Ubiquinone biosynthesis</keyword>
<sequence>MKYHDLRDFLTLLEQQGELKRITLPVDPHLEITEIADRTLRAGGPALLFENPKGYSMPVLCNLFGTPRRVALGMGQEDVSSLREVGKLLAFLKEPEPPKGFRDLFDKLPQFKQVLNMPTKRLRGAPCQQKIIQGDDVDLNKIPIMTCWPEDAAPLITWGLTVTRGPHKERQNLGIYRQQLIGKNKLIMRWLSHRGGALDFQEWCAAHPGERFPVSVALGADPATILGAVTPVPDTLSEYAFAGLLRGTKTEVVKCVSNDLEVPASAEIVLEGYIEAGEMAPEGPYGDHTGYYNEVDSFPVFTVTHITQREDAIYHSTYTGRPPDEPAVLGVALNEVFVPILQKQFPEIVDFYLPPEGCSYRLAVVTMKKQYAGHAKRVMMGVWSFLRQFMYTKFVIVCDDDVNARDWNDVIWAITTRMDPARDTVLVENTPIDYLDFASPVSGLGSKMGLDATNKWPGETQREWGRPIKKDPQVTARIDAIWDELAIFK</sequence>
<protein>
    <recommendedName>
        <fullName evidence="1">3-octaprenyl-4-hydroxybenzoate carboxy-lyase</fullName>
        <ecNumber evidence="1">4.1.1.98</ecNumber>
    </recommendedName>
    <alternativeName>
        <fullName evidence="1">Polyprenyl p-hydroxybenzoate decarboxylase</fullName>
    </alternativeName>
</protein>
<organism>
    <name type="scientific">Klebsiella pneumoniae (strain 342)</name>
    <dbReference type="NCBI Taxonomy" id="507522"/>
    <lineage>
        <taxon>Bacteria</taxon>
        <taxon>Pseudomonadati</taxon>
        <taxon>Pseudomonadota</taxon>
        <taxon>Gammaproteobacteria</taxon>
        <taxon>Enterobacterales</taxon>
        <taxon>Enterobacteriaceae</taxon>
        <taxon>Klebsiella/Raoultella group</taxon>
        <taxon>Klebsiella</taxon>
        <taxon>Klebsiella pneumoniae complex</taxon>
    </lineage>
</organism>
<reference key="1">
    <citation type="journal article" date="2008" name="PLoS Genet.">
        <title>Complete genome sequence of the N2-fixing broad host range endophyte Klebsiella pneumoniae 342 and virulence predictions verified in mice.</title>
        <authorList>
            <person name="Fouts D.E."/>
            <person name="Tyler H.L."/>
            <person name="DeBoy R.T."/>
            <person name="Daugherty S."/>
            <person name="Ren Q."/>
            <person name="Badger J.H."/>
            <person name="Durkin A.S."/>
            <person name="Huot H."/>
            <person name="Shrivastava S."/>
            <person name="Kothari S."/>
            <person name="Dodson R.J."/>
            <person name="Mohamoud Y."/>
            <person name="Khouri H."/>
            <person name="Roesch L.F.W."/>
            <person name="Krogfelt K.A."/>
            <person name="Struve C."/>
            <person name="Triplett E.W."/>
            <person name="Methe B.A."/>
        </authorList>
    </citation>
    <scope>NUCLEOTIDE SEQUENCE [LARGE SCALE GENOMIC DNA]</scope>
    <source>
        <strain>342</strain>
    </source>
</reference>
<accession>B5XYH3</accession>
<gene>
    <name evidence="1" type="primary">ubiD</name>
    <name type="ordered locus">KPK_5336</name>
</gene>
<evidence type="ECO:0000255" key="1">
    <source>
        <dbReference type="HAMAP-Rule" id="MF_01636"/>
    </source>
</evidence>
<feature type="chain" id="PRO_1000186715" description="3-octaprenyl-4-hydroxybenzoate carboxy-lyase">
    <location>
        <begin position="1"/>
        <end position="489"/>
    </location>
</feature>
<feature type="active site" description="Proton donor" evidence="1">
    <location>
        <position position="287"/>
    </location>
</feature>
<feature type="binding site" evidence="1">
    <location>
        <position position="172"/>
    </location>
    <ligand>
        <name>Mn(2+)</name>
        <dbReference type="ChEBI" id="CHEBI:29035"/>
    </ligand>
</feature>
<feature type="binding site" evidence="1">
    <location>
        <begin position="175"/>
        <end position="177"/>
    </location>
    <ligand>
        <name>prenylated FMN</name>
        <dbReference type="ChEBI" id="CHEBI:87746"/>
    </ligand>
</feature>
<feature type="binding site" evidence="1">
    <location>
        <begin position="189"/>
        <end position="191"/>
    </location>
    <ligand>
        <name>prenylated FMN</name>
        <dbReference type="ChEBI" id="CHEBI:87746"/>
    </ligand>
</feature>
<feature type="binding site" evidence="1">
    <location>
        <begin position="194"/>
        <end position="195"/>
    </location>
    <ligand>
        <name>prenylated FMN</name>
        <dbReference type="ChEBI" id="CHEBI:87746"/>
    </ligand>
</feature>
<feature type="binding site" evidence="1">
    <location>
        <position position="238"/>
    </location>
    <ligand>
        <name>Mn(2+)</name>
        <dbReference type="ChEBI" id="CHEBI:29035"/>
    </ligand>
</feature>
<name>UBID_KLEP3</name>
<dbReference type="EC" id="4.1.1.98" evidence="1"/>
<dbReference type="EMBL" id="CP000964">
    <property type="protein sequence ID" value="ACI10791.1"/>
    <property type="molecule type" value="Genomic_DNA"/>
</dbReference>
<dbReference type="SMR" id="B5XYH3"/>
<dbReference type="KEGG" id="kpe:KPK_5336"/>
<dbReference type="HOGENOM" id="CLU_023348_4_1_6"/>
<dbReference type="UniPathway" id="UPA00232"/>
<dbReference type="Proteomes" id="UP000001734">
    <property type="component" value="Chromosome"/>
</dbReference>
<dbReference type="GO" id="GO:0005829">
    <property type="term" value="C:cytosol"/>
    <property type="evidence" value="ECO:0007669"/>
    <property type="project" value="TreeGrafter"/>
</dbReference>
<dbReference type="GO" id="GO:0005886">
    <property type="term" value="C:plasma membrane"/>
    <property type="evidence" value="ECO:0007669"/>
    <property type="project" value="UniProtKB-SubCell"/>
</dbReference>
<dbReference type="GO" id="GO:0008694">
    <property type="term" value="F:3-octaprenyl-4-hydroxybenzoate carboxy-lyase activity"/>
    <property type="evidence" value="ECO:0007669"/>
    <property type="project" value="UniProtKB-UniRule"/>
</dbReference>
<dbReference type="GO" id="GO:0046872">
    <property type="term" value="F:metal ion binding"/>
    <property type="evidence" value="ECO:0007669"/>
    <property type="project" value="UniProtKB-KW"/>
</dbReference>
<dbReference type="GO" id="GO:0006744">
    <property type="term" value="P:ubiquinone biosynthetic process"/>
    <property type="evidence" value="ECO:0007669"/>
    <property type="project" value="UniProtKB-UniRule"/>
</dbReference>
<dbReference type="FunFam" id="1.20.5.570:FF:000001">
    <property type="entry name" value="3-octaprenyl-4-hydroxybenzoate carboxy-lyase"/>
    <property type="match status" value="1"/>
</dbReference>
<dbReference type="FunFam" id="3.40.1670.10:FF:000001">
    <property type="entry name" value="3-octaprenyl-4-hydroxybenzoate carboxy-lyase"/>
    <property type="match status" value="1"/>
</dbReference>
<dbReference type="Gene3D" id="1.20.5.570">
    <property type="entry name" value="Single helix bin"/>
    <property type="match status" value="1"/>
</dbReference>
<dbReference type="Gene3D" id="3.40.1670.10">
    <property type="entry name" value="UbiD C-terminal domain-like"/>
    <property type="match status" value="1"/>
</dbReference>
<dbReference type="HAMAP" id="MF_01636">
    <property type="entry name" value="UbiD"/>
    <property type="match status" value="1"/>
</dbReference>
<dbReference type="InterPro" id="IPR002830">
    <property type="entry name" value="UbiD"/>
</dbReference>
<dbReference type="InterPro" id="IPR049381">
    <property type="entry name" value="UbiD-like_C"/>
</dbReference>
<dbReference type="InterPro" id="IPR049383">
    <property type="entry name" value="UbiD-like_N"/>
</dbReference>
<dbReference type="InterPro" id="IPR023677">
    <property type="entry name" value="UbiD_bacteria"/>
</dbReference>
<dbReference type="InterPro" id="IPR048304">
    <property type="entry name" value="UbiD_Rift_dom"/>
</dbReference>
<dbReference type="NCBIfam" id="NF008175">
    <property type="entry name" value="PRK10922.1"/>
    <property type="match status" value="1"/>
</dbReference>
<dbReference type="NCBIfam" id="TIGR00148">
    <property type="entry name" value="UbiD family decarboxylase"/>
    <property type="match status" value="1"/>
</dbReference>
<dbReference type="PANTHER" id="PTHR30108">
    <property type="entry name" value="3-OCTAPRENYL-4-HYDROXYBENZOATE CARBOXY-LYASE-RELATED"/>
    <property type="match status" value="1"/>
</dbReference>
<dbReference type="PANTHER" id="PTHR30108:SF17">
    <property type="entry name" value="FERULIC ACID DECARBOXYLASE 1"/>
    <property type="match status" value="1"/>
</dbReference>
<dbReference type="Pfam" id="PF01977">
    <property type="entry name" value="UbiD"/>
    <property type="match status" value="1"/>
</dbReference>
<dbReference type="Pfam" id="PF20696">
    <property type="entry name" value="UbiD_C"/>
    <property type="match status" value="1"/>
</dbReference>
<dbReference type="Pfam" id="PF20695">
    <property type="entry name" value="UbiD_N"/>
    <property type="match status" value="1"/>
</dbReference>
<dbReference type="SUPFAM" id="SSF50475">
    <property type="entry name" value="FMN-binding split barrel"/>
    <property type="match status" value="1"/>
</dbReference>
<dbReference type="SUPFAM" id="SSF143968">
    <property type="entry name" value="UbiD C-terminal domain-like"/>
    <property type="match status" value="1"/>
</dbReference>
<proteinExistence type="inferred from homology"/>
<comment type="function">
    <text evidence="1">Catalyzes the decarboxylation of 3-octaprenyl-4-hydroxy benzoate to 2-octaprenylphenol, an intermediate step in ubiquinone biosynthesis.</text>
</comment>
<comment type="catalytic activity">
    <reaction evidence="1">
        <text>a 4-hydroxy-3-(all-trans-polyprenyl)benzoate + H(+) = a 2-(all-trans-polyprenyl)phenol + CO2</text>
        <dbReference type="Rhea" id="RHEA:41680"/>
        <dbReference type="Rhea" id="RHEA-COMP:9514"/>
        <dbReference type="Rhea" id="RHEA-COMP:9516"/>
        <dbReference type="ChEBI" id="CHEBI:1269"/>
        <dbReference type="ChEBI" id="CHEBI:15378"/>
        <dbReference type="ChEBI" id="CHEBI:16526"/>
        <dbReference type="ChEBI" id="CHEBI:78396"/>
        <dbReference type="EC" id="4.1.1.98"/>
    </reaction>
</comment>
<comment type="cofactor">
    <cofactor evidence="1">
        <name>prenylated FMN</name>
        <dbReference type="ChEBI" id="CHEBI:87746"/>
    </cofactor>
    <text evidence="1">Binds 1 prenylated FMN per subunit.</text>
</comment>
<comment type="cofactor">
    <cofactor evidence="1">
        <name>Mn(2+)</name>
        <dbReference type="ChEBI" id="CHEBI:29035"/>
    </cofactor>
</comment>
<comment type="pathway">
    <text evidence="1">Cofactor biosynthesis; ubiquinone biosynthesis.</text>
</comment>
<comment type="subunit">
    <text evidence="1">Homohexamer.</text>
</comment>
<comment type="subcellular location">
    <subcellularLocation>
        <location evidence="1">Cell membrane</location>
        <topology evidence="1">Peripheral membrane protein</topology>
    </subcellularLocation>
</comment>
<comment type="similarity">
    <text evidence="1">Belongs to the UbiD family.</text>
</comment>